<organism>
    <name type="scientific">Glycine max</name>
    <name type="common">Soybean</name>
    <name type="synonym">Glycine hispida</name>
    <dbReference type="NCBI Taxonomy" id="3847"/>
    <lineage>
        <taxon>Eukaryota</taxon>
        <taxon>Viridiplantae</taxon>
        <taxon>Streptophyta</taxon>
        <taxon>Embryophyta</taxon>
        <taxon>Tracheophyta</taxon>
        <taxon>Spermatophyta</taxon>
        <taxon>Magnoliopsida</taxon>
        <taxon>eudicotyledons</taxon>
        <taxon>Gunneridae</taxon>
        <taxon>Pentapetalae</taxon>
        <taxon>rosids</taxon>
        <taxon>fabids</taxon>
        <taxon>Fabales</taxon>
        <taxon>Fabaceae</taxon>
        <taxon>Papilionoideae</taxon>
        <taxon>50 kb inversion clade</taxon>
        <taxon>NPAAA clade</taxon>
        <taxon>indigoferoid/millettioid clade</taxon>
        <taxon>Phaseoleae</taxon>
        <taxon>Glycine</taxon>
        <taxon>Glycine subgen. Soja</taxon>
    </lineage>
</organism>
<comment type="function">
    <text evidence="1">DNA-dependent RNA polymerase catalyzes the transcription of DNA into RNA using the four ribonucleoside triphosphates as substrates.</text>
</comment>
<comment type="catalytic activity">
    <reaction evidence="1">
        <text>RNA(n) + a ribonucleoside 5'-triphosphate = RNA(n+1) + diphosphate</text>
        <dbReference type="Rhea" id="RHEA:21248"/>
        <dbReference type="Rhea" id="RHEA-COMP:14527"/>
        <dbReference type="Rhea" id="RHEA-COMP:17342"/>
        <dbReference type="ChEBI" id="CHEBI:33019"/>
        <dbReference type="ChEBI" id="CHEBI:61557"/>
        <dbReference type="ChEBI" id="CHEBI:140395"/>
        <dbReference type="EC" id="2.7.7.6"/>
    </reaction>
</comment>
<comment type="cofactor">
    <cofactor evidence="1">
        <name>Mg(2+)</name>
        <dbReference type="ChEBI" id="CHEBI:18420"/>
    </cofactor>
    <text evidence="1">Binds 1 Mg(2+) ion per subunit.</text>
</comment>
<comment type="cofactor">
    <cofactor evidence="1">
        <name>Zn(2+)</name>
        <dbReference type="ChEBI" id="CHEBI:29105"/>
    </cofactor>
    <text evidence="1">Binds 1 Zn(2+) ion per subunit.</text>
</comment>
<comment type="subunit">
    <text evidence="1">In plastids the minimal PEP RNA polymerase catalytic core is composed of four subunits: alpha, beta, beta', and beta''. When a (nuclear-encoded) sigma factor is associated with the core the holoenzyme is formed, which can initiate transcription.</text>
</comment>
<comment type="subcellular location">
    <subcellularLocation>
        <location evidence="1">Plastid</location>
        <location evidence="1">Chloroplast</location>
    </subcellularLocation>
</comment>
<comment type="similarity">
    <text evidence="1">Belongs to the RNA polymerase beta' chain family. RpoC1 subfamily.</text>
</comment>
<sequence>MIDQYKHQQLRIGSVSPQQISAWAKKILPNGEIVGEVTKPYTFHYKTNKPEKDGLFCERIFGPIKSGICACGNYRVIRDKKDDPKFCEQCGVEFIDSRIRRYQMGYIKLACLVTHVWYLKRLPSYIANLLDKSLKELESLVYCDFSFARPVVKKPTFLRLRGSFEYEIQSWKHSIPLFFTTQGFDIFRNREISSGAGAIREQLADLDLRILMDSSLIEWKELGEEGSPDNENEWEDRKVGRRKNFLVRRIELAKHFLRTNIEPEWMVLCLLPVLPPELRPIIQIDGGKLMSSDINELYRRVIYRNNTLIDLLTTSRSTPGELVMCQEKLVQEAVDTLLDNGIRGQPMRDGHNKVYKSFSDIIEGKEGRFRETLLGKRVDYSGRSVIVVGPSLSLHRCGLPREIAIELFQTFLIRGLIRKHFASNIGIAKSKIREKEPIVWEILQEVMQGHPVLLNRAPTLHRLGIQAFQPILVEGRAICLHPLVCKGFNADFDGDQMAVHVPLSLEAQAEARLLMFSHTNLLSPAIGDPISVPTQDMLIGLYILTSGNRRGIYSNRYNPRNCGNFRNLKNERIRDNNYKYTKKKEPFFCNSYDAIGAYQQKRINFDSPLWLRWRLDQRIISSREVPIEVHYESLGTYHEIYEHYLVVRSTKKEIRSIYIRTNVGHISFYREIEEAIQGFCRAYSYDI</sequence>
<feature type="chain" id="PRO_0000067899" description="DNA-directed RNA polymerase subunit beta'">
    <location>
        <begin position="1"/>
        <end position="687"/>
    </location>
</feature>
<feature type="binding site" evidence="1">
    <location>
        <position position="69"/>
    </location>
    <ligand>
        <name>Zn(2+)</name>
        <dbReference type="ChEBI" id="CHEBI:29105"/>
    </ligand>
</feature>
<feature type="binding site" evidence="1">
    <location>
        <position position="71"/>
    </location>
    <ligand>
        <name>Zn(2+)</name>
        <dbReference type="ChEBI" id="CHEBI:29105"/>
    </ligand>
</feature>
<feature type="binding site" evidence="1">
    <location>
        <position position="87"/>
    </location>
    <ligand>
        <name>Zn(2+)</name>
        <dbReference type="ChEBI" id="CHEBI:29105"/>
    </ligand>
</feature>
<feature type="binding site" evidence="1">
    <location>
        <position position="90"/>
    </location>
    <ligand>
        <name>Zn(2+)</name>
        <dbReference type="ChEBI" id="CHEBI:29105"/>
    </ligand>
</feature>
<feature type="binding site" evidence="1">
    <location>
        <position position="491"/>
    </location>
    <ligand>
        <name>Mg(2+)</name>
        <dbReference type="ChEBI" id="CHEBI:18420"/>
    </ligand>
</feature>
<feature type="binding site" evidence="1">
    <location>
        <position position="493"/>
    </location>
    <ligand>
        <name>Mg(2+)</name>
        <dbReference type="ChEBI" id="CHEBI:18420"/>
    </ligand>
</feature>
<feature type="binding site" evidence="1">
    <location>
        <position position="495"/>
    </location>
    <ligand>
        <name>Mg(2+)</name>
        <dbReference type="ChEBI" id="CHEBI:18420"/>
    </ligand>
</feature>
<feature type="sequence conflict" description="In Ref. 1; AAL07335." evidence="2" ref="1">
    <original>VV</original>
    <variation>IA</variation>
    <location>
        <begin position="151"/>
        <end position="152"/>
    </location>
</feature>
<feature type="sequence conflict" description="In Ref. 1; AAL07335." evidence="2" ref="1">
    <original>S</original>
    <variation>L</variation>
    <location>
        <position position="163"/>
    </location>
</feature>
<feature type="sequence conflict" description="In Ref. 1; AAL07335." evidence="2" ref="1">
    <original>H</original>
    <variation>Y</variation>
    <location>
        <position position="173"/>
    </location>
</feature>
<feature type="sequence conflict" description="In Ref. 1; AAL07335." evidence="2" ref="1">
    <original>I</original>
    <variation>T</variation>
    <location>
        <position position="186"/>
    </location>
</feature>
<feature type="sequence conflict" description="In Ref. 1; AAL07335." evidence="2" ref="1">
    <original>S</original>
    <variation>T</variation>
    <location>
        <position position="194"/>
    </location>
</feature>
<feature type="sequence conflict" description="In Ref. 1; AAL07335." evidence="2" ref="1">
    <original>ILMDSSLI</original>
    <variation>TIIDYSFA</variation>
    <location>
        <begin position="210"/>
        <end position="217"/>
    </location>
</feature>
<feature type="sequence conflict" description="In Ref. 1; AAL07335." evidence="2" ref="1">
    <original>PDNE</original>
    <variation>TG</variation>
    <location>
        <begin position="228"/>
        <end position="231"/>
    </location>
</feature>
<feature type="sequence conflict" description="In Ref. 1; AAL07335." evidence="2" ref="1">
    <location>
        <begin position="685"/>
        <end position="687"/>
    </location>
</feature>
<protein>
    <recommendedName>
        <fullName evidence="1">DNA-directed RNA polymerase subunit beta'</fullName>
        <ecNumber evidence="1">2.7.7.6</ecNumber>
    </recommendedName>
    <alternativeName>
        <fullName evidence="1">PEP</fullName>
    </alternativeName>
    <alternativeName>
        <fullName evidence="1">Plastid-encoded RNA polymerase subunit beta'</fullName>
        <shortName evidence="1">RNA polymerase subunit beta'</shortName>
    </alternativeName>
</protein>
<gene>
    <name evidence="1" type="primary">rpoC1</name>
</gene>
<keyword id="KW-0150">Chloroplast</keyword>
<keyword id="KW-0240">DNA-directed RNA polymerase</keyword>
<keyword id="KW-0460">Magnesium</keyword>
<keyword id="KW-0479">Metal-binding</keyword>
<keyword id="KW-0548">Nucleotidyltransferase</keyword>
<keyword id="KW-0934">Plastid</keyword>
<keyword id="KW-1185">Reference proteome</keyword>
<keyword id="KW-0804">Transcription</keyword>
<keyword id="KW-0808">Transferase</keyword>
<keyword id="KW-0862">Zinc</keyword>
<geneLocation type="chloroplast"/>
<accession>Q8HVY4</accession>
<accession>Q2PMT4</accession>
<name>RPOC1_SOYBN</name>
<reference key="1">
    <citation type="submission" date="2000-07" db="EMBL/GenBank/DDBJ databases">
        <title>Sequence of rpoBC gene cluster.</title>
        <authorList>
            <person name="Min-Gu L."/>
            <person name="Hoon-Seok Y."/>
            <person name="Jeong-Kook K."/>
        </authorList>
    </citation>
    <scope>NUCLEOTIDE SEQUENCE [GENOMIC DNA]</scope>
</reference>
<reference key="2">
    <citation type="journal article" date="2005" name="Plant Mol. Biol.">
        <title>Complete chloroplast genome sequence of Glycine max and comparative analyses with other legume genomes.</title>
        <authorList>
            <person name="Saski C."/>
            <person name="Lee S.-B."/>
            <person name="Daniell H."/>
            <person name="Wood T.C."/>
            <person name="Tomkins J."/>
            <person name="Kim H.-G."/>
            <person name="Jansen R.K."/>
        </authorList>
    </citation>
    <scope>NUCLEOTIDE SEQUENCE [LARGE SCALE GENOMIC DNA]</scope>
    <source>
        <strain>cv. PI 437654</strain>
    </source>
</reference>
<proteinExistence type="inferred from homology"/>
<evidence type="ECO:0000255" key="1">
    <source>
        <dbReference type="HAMAP-Rule" id="MF_01323"/>
    </source>
</evidence>
<evidence type="ECO:0000305" key="2"/>
<dbReference type="EC" id="2.7.7.6" evidence="1"/>
<dbReference type="EMBL" id="AF289093">
    <property type="protein sequence ID" value="AAL07335.1"/>
    <property type="molecule type" value="Genomic_DNA"/>
</dbReference>
<dbReference type="EMBL" id="DQ317523">
    <property type="protein sequence ID" value="ABC25124.1"/>
    <property type="molecule type" value="Genomic_DNA"/>
</dbReference>
<dbReference type="RefSeq" id="YP_538764.1">
    <property type="nucleotide sequence ID" value="NC_007942.1"/>
</dbReference>
<dbReference type="SMR" id="Q8HVY4"/>
<dbReference type="FunCoup" id="Q8HVY4">
    <property type="interactions" value="125"/>
</dbReference>
<dbReference type="STRING" id="3847.Q8HVY4"/>
<dbReference type="PaxDb" id="3847-GLYMA01G15382.1"/>
<dbReference type="GeneID" id="3989292"/>
<dbReference type="KEGG" id="gmx:3989292"/>
<dbReference type="InParanoid" id="Q8HVY4"/>
<dbReference type="Proteomes" id="UP000008827">
    <property type="component" value="Chloroplast"/>
</dbReference>
<dbReference type="GO" id="GO:0009507">
    <property type="term" value="C:chloroplast"/>
    <property type="evidence" value="ECO:0007669"/>
    <property type="project" value="UniProtKB-SubCell"/>
</dbReference>
<dbReference type="GO" id="GO:0000428">
    <property type="term" value="C:DNA-directed RNA polymerase complex"/>
    <property type="evidence" value="ECO:0007669"/>
    <property type="project" value="UniProtKB-KW"/>
</dbReference>
<dbReference type="GO" id="GO:0005739">
    <property type="term" value="C:mitochondrion"/>
    <property type="evidence" value="ECO:0007669"/>
    <property type="project" value="GOC"/>
</dbReference>
<dbReference type="GO" id="GO:0003677">
    <property type="term" value="F:DNA binding"/>
    <property type="evidence" value="ECO:0007669"/>
    <property type="project" value="UniProtKB-UniRule"/>
</dbReference>
<dbReference type="GO" id="GO:0003899">
    <property type="term" value="F:DNA-directed RNA polymerase activity"/>
    <property type="evidence" value="ECO:0007669"/>
    <property type="project" value="UniProtKB-UniRule"/>
</dbReference>
<dbReference type="GO" id="GO:0000287">
    <property type="term" value="F:magnesium ion binding"/>
    <property type="evidence" value="ECO:0007669"/>
    <property type="project" value="UniProtKB-UniRule"/>
</dbReference>
<dbReference type="GO" id="GO:0008270">
    <property type="term" value="F:zinc ion binding"/>
    <property type="evidence" value="ECO:0007669"/>
    <property type="project" value="UniProtKB-UniRule"/>
</dbReference>
<dbReference type="GO" id="GO:0006351">
    <property type="term" value="P:DNA-templated transcription"/>
    <property type="evidence" value="ECO:0007669"/>
    <property type="project" value="UniProtKB-UniRule"/>
</dbReference>
<dbReference type="FunFam" id="4.10.860.120:FF:000007">
    <property type="entry name" value="DNA-directed RNA polymerase subunit gamma"/>
    <property type="match status" value="1"/>
</dbReference>
<dbReference type="Gene3D" id="1.10.40.90">
    <property type="match status" value="1"/>
</dbReference>
<dbReference type="Gene3D" id="2.40.40.20">
    <property type="match status" value="1"/>
</dbReference>
<dbReference type="Gene3D" id="4.10.860.120">
    <property type="entry name" value="RNA polymerase II, clamp domain"/>
    <property type="match status" value="1"/>
</dbReference>
<dbReference type="Gene3D" id="1.10.274.100">
    <property type="entry name" value="RNA polymerase Rpb1, domain 3"/>
    <property type="match status" value="1"/>
</dbReference>
<dbReference type="HAMAP" id="MF_01323">
    <property type="entry name" value="RNApol_bact_RpoC1"/>
    <property type="match status" value="1"/>
</dbReference>
<dbReference type="InterPro" id="IPR045867">
    <property type="entry name" value="DNA-dir_RpoC_beta_prime"/>
</dbReference>
<dbReference type="InterPro" id="IPR000722">
    <property type="entry name" value="RNA_pol_asu"/>
</dbReference>
<dbReference type="InterPro" id="IPR006592">
    <property type="entry name" value="RNA_pol_N"/>
</dbReference>
<dbReference type="InterPro" id="IPR007080">
    <property type="entry name" value="RNA_pol_Rpb1_1"/>
</dbReference>
<dbReference type="InterPro" id="IPR042102">
    <property type="entry name" value="RNA_pol_Rpb1_3_sf"/>
</dbReference>
<dbReference type="InterPro" id="IPR044893">
    <property type="entry name" value="RNA_pol_Rpb1_clamp_domain"/>
</dbReference>
<dbReference type="InterPro" id="IPR034678">
    <property type="entry name" value="RNApol_RpoC1"/>
</dbReference>
<dbReference type="PANTHER" id="PTHR19376">
    <property type="entry name" value="DNA-DIRECTED RNA POLYMERASE"/>
    <property type="match status" value="1"/>
</dbReference>
<dbReference type="PANTHER" id="PTHR19376:SF54">
    <property type="entry name" value="DNA-DIRECTED RNA POLYMERASE SUBUNIT BETA"/>
    <property type="match status" value="1"/>
</dbReference>
<dbReference type="Pfam" id="PF04997">
    <property type="entry name" value="RNA_pol_Rpb1_1"/>
    <property type="match status" value="1"/>
</dbReference>
<dbReference type="Pfam" id="PF00623">
    <property type="entry name" value="RNA_pol_Rpb1_2"/>
    <property type="match status" value="2"/>
</dbReference>
<dbReference type="SMART" id="SM00663">
    <property type="entry name" value="RPOLA_N"/>
    <property type="match status" value="1"/>
</dbReference>
<dbReference type="SUPFAM" id="SSF64484">
    <property type="entry name" value="beta and beta-prime subunits of DNA dependent RNA-polymerase"/>
    <property type="match status" value="1"/>
</dbReference>